<sequence>MAQRWDPQRLAGGQPQDSHEDSTQSSIFTYTNSNATRGPFEGPNYHIAPRWVYHITSTWMIIVVIASVFTNGLVLVATMKFKKLRHPLNWILVNLAIADLAETVIASTISVVNQLYGYFVLGHPLCVVEGYTVSVCGITGLWSLAIISWERWLVVCKPFGNMRFDAKLAIVGIAFSWIWSAVWTAPPIFGWSRYWPYGLKTSCGPDVFSGTSYPGVQSYMMVLMVTCCIIPLSIIILCYLQVWLAIRAVAKQQKESESTQKAEKEVTRMVVVMVFAYCLCWGPYTFFACFATANPGYAFHPLVAALPAYFAKSATIYNPIIYVFMNRQFRNCILQLFGKKVDDTSELSSASKTEASSVSSVSPA</sequence>
<gene>
    <name type="primary">OPN1MW</name>
    <name type="synonym">GCP</name>
</gene>
<feature type="chain" id="PRO_0000197790" description="Medium-wave-sensitive opsin 1">
    <location>
        <begin position="1"/>
        <end position="364"/>
    </location>
</feature>
<feature type="topological domain" description="Extracellular">
    <location>
        <begin position="1"/>
        <end position="52"/>
    </location>
</feature>
<feature type="transmembrane region" description="Helical; Name=1" evidence="4">
    <location>
        <begin position="53"/>
        <end position="77"/>
    </location>
</feature>
<feature type="topological domain" description="Cytoplasmic" evidence="4">
    <location>
        <begin position="78"/>
        <end position="89"/>
    </location>
</feature>
<feature type="transmembrane region" description="Helical; Name=2" evidence="4">
    <location>
        <begin position="90"/>
        <end position="115"/>
    </location>
</feature>
<feature type="topological domain" description="Extracellular" evidence="4">
    <location>
        <begin position="116"/>
        <end position="129"/>
    </location>
</feature>
<feature type="transmembrane region" description="Helical; Name=3" evidence="4">
    <location>
        <begin position="130"/>
        <end position="149"/>
    </location>
</feature>
<feature type="topological domain" description="Cytoplasmic" evidence="4">
    <location>
        <begin position="150"/>
        <end position="168"/>
    </location>
</feature>
<feature type="transmembrane region" description="Helical; Name=4" evidence="4">
    <location>
        <begin position="169"/>
        <end position="192"/>
    </location>
</feature>
<feature type="topological domain" description="Extracellular" evidence="4">
    <location>
        <begin position="193"/>
        <end position="218"/>
    </location>
</feature>
<feature type="transmembrane region" description="Helical; Name=5" evidence="4">
    <location>
        <begin position="219"/>
        <end position="246"/>
    </location>
</feature>
<feature type="topological domain" description="Cytoplasmic" evidence="4">
    <location>
        <begin position="247"/>
        <end position="268"/>
    </location>
</feature>
<feature type="transmembrane region" description="Helical; Name=6" evidence="4">
    <location>
        <begin position="269"/>
        <end position="292"/>
    </location>
</feature>
<feature type="topological domain" description="Extracellular" evidence="4">
    <location>
        <begin position="293"/>
        <end position="300"/>
    </location>
</feature>
<feature type="transmembrane region" description="Helical; Name=7" evidence="4">
    <location>
        <begin position="301"/>
        <end position="320"/>
    </location>
</feature>
<feature type="topological domain" description="Cytoplasmic" evidence="4">
    <location>
        <begin position="321"/>
        <end position="364"/>
    </location>
</feature>
<feature type="region of interest" description="Disordered" evidence="6">
    <location>
        <begin position="1"/>
        <end position="24"/>
    </location>
</feature>
<feature type="region of interest" description="Required for 11-cis-retinal regeneration" evidence="3">
    <location>
        <begin position="17"/>
        <end position="43"/>
    </location>
</feature>
<feature type="modified residue" description="N6-(retinylidene)lysine" evidence="1">
    <location>
        <position position="312"/>
    </location>
</feature>
<feature type="glycosylation site" description="N-linked (GlcNAc...) asparagine" evidence="4">
    <location>
        <position position="34"/>
    </location>
</feature>
<feature type="disulfide bond" evidence="5">
    <location>
        <begin position="126"/>
        <end position="203"/>
    </location>
</feature>
<feature type="sequence conflict" description="In Ref. 2; AAB86948." evidence="8" ref="2">
    <original>V</original>
    <variation>M</variation>
    <location>
        <position position="216"/>
    </location>
</feature>
<proteinExistence type="evidence at protein level"/>
<keyword id="KW-0157">Chromophore</keyword>
<keyword id="KW-1015">Disulfide bond</keyword>
<keyword id="KW-0297">G-protein coupled receptor</keyword>
<keyword id="KW-0325">Glycoprotein</keyword>
<keyword id="KW-0449">Lipoprotein</keyword>
<keyword id="KW-0472">Membrane</keyword>
<keyword id="KW-0564">Palmitate</keyword>
<keyword id="KW-0597">Phosphoprotein</keyword>
<keyword id="KW-0600">Photoreceptor protein</keyword>
<keyword id="KW-0675">Receptor</keyword>
<keyword id="KW-0681">Retinal protein</keyword>
<keyword id="KW-0716">Sensory transduction</keyword>
<keyword id="KW-0807">Transducer</keyword>
<keyword id="KW-0812">Transmembrane</keyword>
<keyword id="KW-1133">Transmembrane helix</keyword>
<keyword id="KW-0844">Vision</keyword>
<organism>
    <name type="scientific">Sciurus carolinensis</name>
    <name type="common">Eastern gray squirrel</name>
    <dbReference type="NCBI Taxonomy" id="30640"/>
    <lineage>
        <taxon>Eukaryota</taxon>
        <taxon>Metazoa</taxon>
        <taxon>Chordata</taxon>
        <taxon>Craniata</taxon>
        <taxon>Vertebrata</taxon>
        <taxon>Euteleostomi</taxon>
        <taxon>Mammalia</taxon>
        <taxon>Eutheria</taxon>
        <taxon>Euarchontoglires</taxon>
        <taxon>Glires</taxon>
        <taxon>Rodentia</taxon>
        <taxon>Sciuromorpha</taxon>
        <taxon>Sciuridae</taxon>
        <taxon>Sciurinae</taxon>
        <taxon>Sciurini</taxon>
        <taxon>Sciurus</taxon>
    </lineage>
</organism>
<comment type="function">
    <text>Visual pigments are the light-absorbing molecules that mediate vision. They consist of an apoprotein, opsin, covalently linked to cis-retinal. May increase spectral sensitivity in dim light.</text>
</comment>
<comment type="biophysicochemical properties">
    <absorption>
        <max evidence="7">532 nm</max>
    </absorption>
</comment>
<comment type="subunit">
    <text evidence="3">Monomer. Homodimer. Homotetramer.</text>
</comment>
<comment type="subcellular location">
    <subcellularLocation>
        <location>Membrane</location>
        <topology>Multi-pass membrane protein</topology>
    </subcellularLocation>
</comment>
<comment type="tissue specificity">
    <text>Expressed in cone photoreceptor cells.</text>
</comment>
<comment type="PTM">
    <text evidence="2">O-glycosylated.</text>
</comment>
<comment type="PTM">
    <text evidence="1">Phosphorylated on some or all of the serine and threonine residues present in the C-terminal region.</text>
</comment>
<comment type="similarity">
    <text evidence="5">Belongs to the G-protein coupled receptor 1 family. Opsin subfamily.</text>
</comment>
<accession>O35478</accession>
<accession>Q9R023</accession>
<name>OPSG_SCICA</name>
<evidence type="ECO:0000250" key="1"/>
<evidence type="ECO:0000250" key="2">
    <source>
        <dbReference type="UniProtKB" id="O35599"/>
    </source>
</evidence>
<evidence type="ECO:0000250" key="3">
    <source>
        <dbReference type="UniProtKB" id="P04001"/>
    </source>
</evidence>
<evidence type="ECO:0000255" key="4"/>
<evidence type="ECO:0000255" key="5">
    <source>
        <dbReference type="PROSITE-ProRule" id="PRU00521"/>
    </source>
</evidence>
<evidence type="ECO:0000256" key="6">
    <source>
        <dbReference type="SAM" id="MobiDB-lite"/>
    </source>
</evidence>
<evidence type="ECO:0000269" key="7">
    <source>
    </source>
</evidence>
<evidence type="ECO:0000305" key="8"/>
<reference key="1">
    <citation type="journal article" date="1999" name="Genetics">
        <title>The molecular genetics of red and green color vision in mammals.</title>
        <authorList>
            <person name="Yokoyama S."/>
            <person name="Radlwimmer F.B."/>
        </authorList>
    </citation>
    <scope>NUCLEOTIDE SEQUENCE [MRNA]</scope>
    <scope>BIOPHYSICOCHEMICAL PROPERTIES</scope>
</reference>
<reference key="2">
    <citation type="journal article" date="1998" name="Mol. Biol. Evol.">
        <title>The 'five-sites' rule and the evolution of red and green color vision in mammals.</title>
        <authorList>
            <person name="Yokoyama S."/>
            <person name="Radlwimmer F.B."/>
        </authorList>
    </citation>
    <scope>NUCLEOTIDE SEQUENCE [MRNA] OF 48-320</scope>
</reference>
<protein>
    <recommendedName>
        <fullName>Medium-wave-sensitive opsin 1</fullName>
    </recommendedName>
    <alternativeName>
        <fullName>Green cone photoreceptor pigment</fullName>
    </alternativeName>
    <alternativeName>
        <fullName>Green-sensitive opsin</fullName>
    </alternativeName>
    <alternativeName>
        <fullName>Medium wavelength-sensitive cone opsin</fullName>
    </alternativeName>
</protein>
<dbReference type="EMBL" id="AF132044">
    <property type="protein sequence ID" value="AAD30525.1"/>
    <property type="molecule type" value="mRNA"/>
</dbReference>
<dbReference type="EMBL" id="AF031530">
    <property type="protein sequence ID" value="AAB86948.1"/>
    <property type="molecule type" value="mRNA"/>
</dbReference>
<dbReference type="SMR" id="O35478"/>
<dbReference type="GlyCosmos" id="O35478">
    <property type="glycosylation" value="1 site, No reported glycans"/>
</dbReference>
<dbReference type="GO" id="GO:0005886">
    <property type="term" value="C:plasma membrane"/>
    <property type="evidence" value="ECO:0000250"/>
    <property type="project" value="UniProtKB"/>
</dbReference>
<dbReference type="GO" id="GO:0004930">
    <property type="term" value="F:G protein-coupled receptor activity"/>
    <property type="evidence" value="ECO:0007669"/>
    <property type="project" value="UniProtKB-KW"/>
</dbReference>
<dbReference type="GO" id="GO:0042802">
    <property type="term" value="F:identical protein binding"/>
    <property type="evidence" value="ECO:0000250"/>
    <property type="project" value="UniProtKB"/>
</dbReference>
<dbReference type="GO" id="GO:0009881">
    <property type="term" value="F:photoreceptor activity"/>
    <property type="evidence" value="ECO:0007669"/>
    <property type="project" value="UniProtKB-KW"/>
</dbReference>
<dbReference type="GO" id="GO:0007602">
    <property type="term" value="P:phototransduction"/>
    <property type="evidence" value="ECO:0007669"/>
    <property type="project" value="UniProtKB-KW"/>
</dbReference>
<dbReference type="GO" id="GO:0007601">
    <property type="term" value="P:visual perception"/>
    <property type="evidence" value="ECO:0007669"/>
    <property type="project" value="UniProtKB-KW"/>
</dbReference>
<dbReference type="FunFam" id="1.20.1070.10:FF:000090">
    <property type="entry name" value="Long-wave-sensitive opsin 1"/>
    <property type="match status" value="1"/>
</dbReference>
<dbReference type="Gene3D" id="1.20.1070.10">
    <property type="entry name" value="Rhodopsin 7-helix transmembrane proteins"/>
    <property type="match status" value="1"/>
</dbReference>
<dbReference type="InterPro" id="IPR050125">
    <property type="entry name" value="GPCR_opsins"/>
</dbReference>
<dbReference type="InterPro" id="IPR000276">
    <property type="entry name" value="GPCR_Rhodpsn"/>
</dbReference>
<dbReference type="InterPro" id="IPR017452">
    <property type="entry name" value="GPCR_Rhodpsn_7TM"/>
</dbReference>
<dbReference type="InterPro" id="IPR001760">
    <property type="entry name" value="Opsin"/>
</dbReference>
<dbReference type="InterPro" id="IPR000378">
    <property type="entry name" value="Opsin_red/grn"/>
</dbReference>
<dbReference type="InterPro" id="IPR027430">
    <property type="entry name" value="Retinal_BS"/>
</dbReference>
<dbReference type="PANTHER" id="PTHR24240">
    <property type="entry name" value="OPSIN"/>
    <property type="match status" value="1"/>
</dbReference>
<dbReference type="Pfam" id="PF00001">
    <property type="entry name" value="7tm_1"/>
    <property type="match status" value="1"/>
</dbReference>
<dbReference type="PRINTS" id="PR00237">
    <property type="entry name" value="GPCRRHODOPSN"/>
</dbReference>
<dbReference type="PRINTS" id="PR00238">
    <property type="entry name" value="OPSIN"/>
</dbReference>
<dbReference type="PRINTS" id="PR00575">
    <property type="entry name" value="OPSINREDGRN"/>
</dbReference>
<dbReference type="SMART" id="SM01381">
    <property type="entry name" value="7TM_GPCR_Srsx"/>
    <property type="match status" value="1"/>
</dbReference>
<dbReference type="SUPFAM" id="SSF81321">
    <property type="entry name" value="Family A G protein-coupled receptor-like"/>
    <property type="match status" value="1"/>
</dbReference>
<dbReference type="PROSITE" id="PS00237">
    <property type="entry name" value="G_PROTEIN_RECEP_F1_1"/>
    <property type="match status" value="1"/>
</dbReference>
<dbReference type="PROSITE" id="PS50262">
    <property type="entry name" value="G_PROTEIN_RECEP_F1_2"/>
    <property type="match status" value="1"/>
</dbReference>
<dbReference type="PROSITE" id="PS00238">
    <property type="entry name" value="OPSIN"/>
    <property type="match status" value="1"/>
</dbReference>